<gene>
    <name type="primary">PP2AB1</name>
    <name type="ordered locus">At1g51690</name>
    <name type="ORF">F19C24.10</name>
</gene>
<proteinExistence type="evidence at protein level"/>
<evidence type="ECO:0000250" key="1"/>
<evidence type="ECO:0000250" key="2">
    <source>
        <dbReference type="UniProtKB" id="Q39247"/>
    </source>
</evidence>
<evidence type="ECO:0000269" key="3">
    <source>
    </source>
</evidence>
<evidence type="ECO:0000269" key="4">
    <source>
    </source>
</evidence>
<evidence type="ECO:0000305" key="5"/>
<accession>Q38821</accession>
<accession>Q0WL96</accession>
<accession>Q27GN0</accession>
<accession>Q8L842</accession>
<accession>Q9C8H8</accession>
<feature type="chain" id="PRO_0000071438" description="Serine/threonine protein phosphatase 2A 55 kDa regulatory subunit B alpha isoform">
    <location>
        <begin position="1"/>
        <end position="513"/>
    </location>
</feature>
<feature type="repeat" description="WD 1">
    <location>
        <begin position="36"/>
        <end position="75"/>
    </location>
</feature>
<feature type="repeat" description="WD 2">
    <location>
        <begin position="112"/>
        <end position="153"/>
    </location>
</feature>
<feature type="repeat" description="WD 3">
    <location>
        <begin position="232"/>
        <end position="270"/>
    </location>
</feature>
<feature type="repeat" description="WD 4">
    <location>
        <begin position="281"/>
        <end position="321"/>
    </location>
</feature>
<feature type="repeat" description="WD 5">
    <location>
        <begin position="340"/>
        <end position="378"/>
    </location>
</feature>
<feature type="repeat" description="WD 6">
    <location>
        <begin position="483"/>
        <end position="513"/>
    </location>
</feature>
<feature type="modified residue" description="N-acetylmethionine" evidence="2">
    <location>
        <position position="1"/>
    </location>
</feature>
<feature type="splice variant" id="VSP_025610" description="In isoform 2." evidence="5">
    <location>
        <position position="214"/>
    </location>
</feature>
<feature type="sequence conflict" description="In Ref. 1; AAA86695." evidence="5" ref="1">
    <original>G</original>
    <variation>R</variation>
    <location>
        <position position="165"/>
    </location>
</feature>
<comment type="function">
    <text evidence="1">The B regulatory subunit may modulate substrate selectivity and catalytic activity, and may also direct the localization of the catalytic enzyme to a particular subcellular compartment.</text>
</comment>
<comment type="subunit">
    <text evidence="1 3">PP2A consists of a common heteromeric enzyme, composed of a catalytic subunit (subunits C), a constant regulatory subunit (subunit A), and a variety of regulatory subunits such as subunits B (the R2/B/PR55/B55, R3/B''/PR72/PR130/PR59 and R5/B'/B56 families) (By similarity). Interacts with SIC/RON3 (PubMed:26888284).</text>
</comment>
<comment type="alternative products">
    <event type="alternative splicing"/>
    <isoform>
        <id>Q38821-1</id>
        <name>1</name>
        <sequence type="displayed"/>
    </isoform>
    <isoform>
        <id>Q38821-2</id>
        <name>2</name>
        <sequence type="described" ref="VSP_025610"/>
    </isoform>
</comment>
<comment type="tissue specificity">
    <text evidence="4">Expressed ubiquitously.</text>
</comment>
<comment type="miscellaneous">
    <molecule>Isoform 2</molecule>
    <text evidence="5">May be due to a competing donor splice site.</text>
</comment>
<comment type="similarity">
    <text evidence="5">Belongs to the phosphatase 2A regulatory subunit B family.</text>
</comment>
<protein>
    <recommendedName>
        <fullName>Serine/threonine protein phosphatase 2A 55 kDa regulatory subunit B alpha isoform</fullName>
        <shortName>AtB alpha</shortName>
        <shortName>PP2A, subunit B, alpha isoform</shortName>
    </recommendedName>
</protein>
<keyword id="KW-0007">Acetylation</keyword>
<keyword id="KW-0025">Alternative splicing</keyword>
<keyword id="KW-1185">Reference proteome</keyword>
<keyword id="KW-0677">Repeat</keyword>
<keyword id="KW-0853">WD repeat</keyword>
<name>2ABA_ARATH</name>
<reference key="1">
    <citation type="journal article" date="1995" name="Plant Mol. Biol.">
        <title>Characterization of a cDNA encoding the 55 kDa B regulatory subunit of Arabidopsis protein phosphatase 2A.</title>
        <authorList>
            <person name="Rundle S.J."/>
            <person name="Hartung A.J."/>
            <person name="Corum J.W. III"/>
            <person name="O'Neill M."/>
        </authorList>
    </citation>
    <scope>NUCLEOTIDE SEQUENCE [MRNA]</scope>
    <scope>TISSUE SPECIFICITY</scope>
</reference>
<reference key="2">
    <citation type="journal article" date="2000" name="Nature">
        <title>Sequence and analysis of chromosome 1 of the plant Arabidopsis thaliana.</title>
        <authorList>
            <person name="Theologis A."/>
            <person name="Ecker J.R."/>
            <person name="Palm C.J."/>
            <person name="Federspiel N.A."/>
            <person name="Kaul S."/>
            <person name="White O."/>
            <person name="Alonso J."/>
            <person name="Altafi H."/>
            <person name="Araujo R."/>
            <person name="Bowman C.L."/>
            <person name="Brooks S.Y."/>
            <person name="Buehler E."/>
            <person name="Chan A."/>
            <person name="Chao Q."/>
            <person name="Chen H."/>
            <person name="Cheuk R.F."/>
            <person name="Chin C.W."/>
            <person name="Chung M.K."/>
            <person name="Conn L."/>
            <person name="Conway A.B."/>
            <person name="Conway A.R."/>
            <person name="Creasy T.H."/>
            <person name="Dewar K."/>
            <person name="Dunn P."/>
            <person name="Etgu P."/>
            <person name="Feldblyum T.V."/>
            <person name="Feng J.-D."/>
            <person name="Fong B."/>
            <person name="Fujii C.Y."/>
            <person name="Gill J.E."/>
            <person name="Goldsmith A.D."/>
            <person name="Haas B."/>
            <person name="Hansen N.F."/>
            <person name="Hughes B."/>
            <person name="Huizar L."/>
            <person name="Hunter J.L."/>
            <person name="Jenkins J."/>
            <person name="Johnson-Hopson C."/>
            <person name="Khan S."/>
            <person name="Khaykin E."/>
            <person name="Kim C.J."/>
            <person name="Koo H.L."/>
            <person name="Kremenetskaia I."/>
            <person name="Kurtz D.B."/>
            <person name="Kwan A."/>
            <person name="Lam B."/>
            <person name="Langin-Hooper S."/>
            <person name="Lee A."/>
            <person name="Lee J.M."/>
            <person name="Lenz C.A."/>
            <person name="Li J.H."/>
            <person name="Li Y.-P."/>
            <person name="Lin X."/>
            <person name="Liu S.X."/>
            <person name="Liu Z.A."/>
            <person name="Luros J.S."/>
            <person name="Maiti R."/>
            <person name="Marziali A."/>
            <person name="Militscher J."/>
            <person name="Miranda M."/>
            <person name="Nguyen M."/>
            <person name="Nierman W.C."/>
            <person name="Osborne B.I."/>
            <person name="Pai G."/>
            <person name="Peterson J."/>
            <person name="Pham P.K."/>
            <person name="Rizzo M."/>
            <person name="Rooney T."/>
            <person name="Rowley D."/>
            <person name="Sakano H."/>
            <person name="Salzberg S.L."/>
            <person name="Schwartz J.R."/>
            <person name="Shinn P."/>
            <person name="Southwick A.M."/>
            <person name="Sun H."/>
            <person name="Tallon L.J."/>
            <person name="Tambunga G."/>
            <person name="Toriumi M.J."/>
            <person name="Town C.D."/>
            <person name="Utterback T."/>
            <person name="Van Aken S."/>
            <person name="Vaysberg M."/>
            <person name="Vysotskaia V.S."/>
            <person name="Walker M."/>
            <person name="Wu D."/>
            <person name="Yu G."/>
            <person name="Fraser C.M."/>
            <person name="Venter J.C."/>
            <person name="Davis R.W."/>
        </authorList>
    </citation>
    <scope>NUCLEOTIDE SEQUENCE [LARGE SCALE GENOMIC DNA]</scope>
    <source>
        <strain>cv. Columbia</strain>
    </source>
</reference>
<reference key="3">
    <citation type="journal article" date="2017" name="Plant J.">
        <title>Araport11: a complete reannotation of the Arabidopsis thaliana reference genome.</title>
        <authorList>
            <person name="Cheng C.Y."/>
            <person name="Krishnakumar V."/>
            <person name="Chan A.P."/>
            <person name="Thibaud-Nissen F."/>
            <person name="Schobel S."/>
            <person name="Town C.D."/>
        </authorList>
    </citation>
    <scope>GENOME REANNOTATION</scope>
    <source>
        <strain>cv. Columbia</strain>
    </source>
</reference>
<reference key="4">
    <citation type="journal article" date="2003" name="Science">
        <title>Empirical analysis of transcriptional activity in the Arabidopsis genome.</title>
        <authorList>
            <person name="Yamada K."/>
            <person name="Lim J."/>
            <person name="Dale J.M."/>
            <person name="Chen H."/>
            <person name="Shinn P."/>
            <person name="Palm C.J."/>
            <person name="Southwick A.M."/>
            <person name="Wu H.C."/>
            <person name="Kim C.J."/>
            <person name="Nguyen M."/>
            <person name="Pham P.K."/>
            <person name="Cheuk R.F."/>
            <person name="Karlin-Newmann G."/>
            <person name="Liu S.X."/>
            <person name="Lam B."/>
            <person name="Sakano H."/>
            <person name="Wu T."/>
            <person name="Yu G."/>
            <person name="Miranda M."/>
            <person name="Quach H.L."/>
            <person name="Tripp M."/>
            <person name="Chang C.H."/>
            <person name="Lee J.M."/>
            <person name="Toriumi M.J."/>
            <person name="Chan M.M."/>
            <person name="Tang C.C."/>
            <person name="Onodera C.S."/>
            <person name="Deng J.M."/>
            <person name="Akiyama K."/>
            <person name="Ansari Y."/>
            <person name="Arakawa T."/>
            <person name="Banh J."/>
            <person name="Banno F."/>
            <person name="Bowser L."/>
            <person name="Brooks S.Y."/>
            <person name="Carninci P."/>
            <person name="Chao Q."/>
            <person name="Choy N."/>
            <person name="Enju A."/>
            <person name="Goldsmith A.D."/>
            <person name="Gurjal M."/>
            <person name="Hansen N.F."/>
            <person name="Hayashizaki Y."/>
            <person name="Johnson-Hopson C."/>
            <person name="Hsuan V.W."/>
            <person name="Iida K."/>
            <person name="Karnes M."/>
            <person name="Khan S."/>
            <person name="Koesema E."/>
            <person name="Ishida J."/>
            <person name="Jiang P.X."/>
            <person name="Jones T."/>
            <person name="Kawai J."/>
            <person name="Kamiya A."/>
            <person name="Meyers C."/>
            <person name="Nakajima M."/>
            <person name="Narusaka M."/>
            <person name="Seki M."/>
            <person name="Sakurai T."/>
            <person name="Satou M."/>
            <person name="Tamse R."/>
            <person name="Vaysberg M."/>
            <person name="Wallender E.K."/>
            <person name="Wong C."/>
            <person name="Yamamura Y."/>
            <person name="Yuan S."/>
            <person name="Shinozaki K."/>
            <person name="Davis R.W."/>
            <person name="Theologis A."/>
            <person name="Ecker J.R."/>
        </authorList>
    </citation>
    <scope>NUCLEOTIDE SEQUENCE [LARGE SCALE MRNA] (ISOFORM 1)</scope>
    <source>
        <strain>cv. Columbia</strain>
    </source>
</reference>
<reference key="5">
    <citation type="submission" date="2006-07" db="EMBL/GenBank/DDBJ databases">
        <title>Large-scale analysis of RIKEN Arabidopsis full-length (RAFL) cDNAs.</title>
        <authorList>
            <person name="Totoki Y."/>
            <person name="Seki M."/>
            <person name="Ishida J."/>
            <person name="Nakajima M."/>
            <person name="Enju A."/>
            <person name="Kamiya A."/>
            <person name="Narusaka M."/>
            <person name="Shin-i T."/>
            <person name="Nakagawa M."/>
            <person name="Sakamoto N."/>
            <person name="Oishi K."/>
            <person name="Kohara Y."/>
            <person name="Kobayashi M."/>
            <person name="Toyoda A."/>
            <person name="Sakaki Y."/>
            <person name="Sakurai T."/>
            <person name="Iida K."/>
            <person name="Akiyama K."/>
            <person name="Satou M."/>
            <person name="Toyoda T."/>
            <person name="Konagaya A."/>
            <person name="Carninci P."/>
            <person name="Kawai J."/>
            <person name="Hayashizaki Y."/>
            <person name="Shinozaki K."/>
        </authorList>
    </citation>
    <scope>NUCLEOTIDE SEQUENCE [LARGE SCALE MRNA] (ISOFORM 1)</scope>
    <source>
        <strain>cv. Columbia</strain>
    </source>
</reference>
<reference key="6">
    <citation type="journal article" date="2009" name="J. Proteomics">
        <title>Phosphoproteomic analysis of nuclei-enriched fractions from Arabidopsis thaliana.</title>
        <authorList>
            <person name="Jones A.M.E."/>
            <person name="MacLean D."/>
            <person name="Studholme D.J."/>
            <person name="Serna-Sanz A."/>
            <person name="Andreasson E."/>
            <person name="Rathjen J.P."/>
            <person name="Peck S.C."/>
        </authorList>
    </citation>
    <scope>IDENTIFICATION BY MASS SPECTROMETRY [LARGE SCALE ANALYSIS]</scope>
    <source>
        <strain>cv. Columbia</strain>
    </source>
</reference>
<reference key="7">
    <citation type="journal article" date="2016" name="Proc. Natl. Acad. Sci. U.S.A.">
        <title>ROTUNDA3 function in plant development by phosphatase 2A-mediated regulation of auxin transporter recycling.</title>
        <authorList>
            <person name="Karampelias M."/>
            <person name="Neyt P."/>
            <person name="De Groeve S."/>
            <person name="Aesaert S."/>
            <person name="Coussens G."/>
            <person name="Rolcik J."/>
            <person name="Bruno L."/>
            <person name="De Winne N."/>
            <person name="Van Minnebruggen A."/>
            <person name="Van Montagu M."/>
            <person name="Ponce M.R."/>
            <person name="Micol J.L."/>
            <person name="Friml J."/>
            <person name="De Jaeger G."/>
            <person name="Van Lijsebettens M."/>
        </authorList>
    </citation>
    <scope>INTERACTION WITH SIC/RON3</scope>
    <source>
        <strain>cv. Columbia</strain>
        <strain>cv. Landsberg erecta</strain>
    </source>
</reference>
<organism>
    <name type="scientific">Arabidopsis thaliana</name>
    <name type="common">Mouse-ear cress</name>
    <dbReference type="NCBI Taxonomy" id="3702"/>
    <lineage>
        <taxon>Eukaryota</taxon>
        <taxon>Viridiplantae</taxon>
        <taxon>Streptophyta</taxon>
        <taxon>Embryophyta</taxon>
        <taxon>Tracheophyta</taxon>
        <taxon>Spermatophyta</taxon>
        <taxon>Magnoliopsida</taxon>
        <taxon>eudicotyledons</taxon>
        <taxon>Gunneridae</taxon>
        <taxon>Pentapetalae</taxon>
        <taxon>rosids</taxon>
        <taxon>malvids</taxon>
        <taxon>Brassicales</taxon>
        <taxon>Brassicaceae</taxon>
        <taxon>Camelineae</taxon>
        <taxon>Arabidopsis</taxon>
    </lineage>
</organism>
<sequence>MNGGDEVVAASADPSLPLEWRFSQVFGERSAGEEVQEVDIISAIEFDNSGNHLATGDRGGRVVLFERTDTNNSSGTRRELEEADYPLRHPEFRYKTEFQSHDPEFDYLKSLEIEEKINKIRWCQTANGALFLLSTNDKTIKFWKVQDKKIKKICDMNSDPSRTVGNGTVASSSNSNITNSCLVNGGVSEVNNSLCNDFSLPAGGISSLRLPVVVTSHESSPVARCRRVYAHAHDYHINSISNNSDGETFISADDLRINLWNLEISNQSFNIVDVKPAKMEDLSEVITSAEFHPTHCNMLAYSSSKGSIRLIDLRQSALCDSHSKLFEEPEQAGPKSFFTEIIASVSDIKFAKEGRYLLSRDYMTLKLWDINMDAGPVATFQVHEYLKPKLCDLYENDSIFDKFECCISGNGLRAATGSYSNLFRVFGVAPGSTETATLEASRNPMRRHVPIPSRPSRALSSITRVVSRGSESPGVDGNTNALDYTTKLLHLAWHPNENSIACAAANSLYMYYA</sequence>
<dbReference type="EMBL" id="U18129">
    <property type="protein sequence ID" value="AAA86695.1"/>
    <property type="molecule type" value="mRNA"/>
</dbReference>
<dbReference type="EMBL" id="AC025294">
    <property type="protein sequence ID" value="AAG50878.1"/>
    <property type="molecule type" value="Genomic_DNA"/>
</dbReference>
<dbReference type="EMBL" id="CP002684">
    <property type="protein sequence ID" value="AEE32701.1"/>
    <property type="molecule type" value="Genomic_DNA"/>
</dbReference>
<dbReference type="EMBL" id="CP002684">
    <property type="protein sequence ID" value="AEE32702.1"/>
    <property type="molecule type" value="Genomic_DNA"/>
</dbReference>
<dbReference type="EMBL" id="CP002684">
    <property type="protein sequence ID" value="ANM60211.1"/>
    <property type="molecule type" value="Genomic_DNA"/>
</dbReference>
<dbReference type="EMBL" id="AY120756">
    <property type="protein sequence ID" value="AAM53314.1"/>
    <property type="molecule type" value="mRNA"/>
</dbReference>
<dbReference type="EMBL" id="BT000109">
    <property type="protein sequence ID" value="AAN15428.1"/>
    <property type="molecule type" value="mRNA"/>
</dbReference>
<dbReference type="EMBL" id="AK230310">
    <property type="protein sequence ID" value="BAF02111.1"/>
    <property type="molecule type" value="mRNA"/>
</dbReference>
<dbReference type="PIR" id="G96555">
    <property type="entry name" value="G96555"/>
</dbReference>
<dbReference type="PIR" id="S55889">
    <property type="entry name" value="S55889"/>
</dbReference>
<dbReference type="RefSeq" id="NP_001322512.1">
    <molecule id="Q38821-1"/>
    <property type="nucleotide sequence ID" value="NM_001333494.1"/>
</dbReference>
<dbReference type="RefSeq" id="NP_564595.1">
    <molecule id="Q38821-1"/>
    <property type="nucleotide sequence ID" value="NM_104047.4"/>
</dbReference>
<dbReference type="RefSeq" id="NP_974003.1">
    <molecule id="Q38821-2"/>
    <property type="nucleotide sequence ID" value="NM_202274.2"/>
</dbReference>
<dbReference type="SMR" id="Q38821"/>
<dbReference type="BioGRID" id="26819">
    <property type="interactions" value="4"/>
</dbReference>
<dbReference type="FunCoup" id="Q38821">
    <property type="interactions" value="3725"/>
</dbReference>
<dbReference type="IntAct" id="Q38821">
    <property type="interactions" value="1"/>
</dbReference>
<dbReference type="STRING" id="3702.Q38821"/>
<dbReference type="iPTMnet" id="Q38821"/>
<dbReference type="PaxDb" id="3702-AT1G51690.3"/>
<dbReference type="ProteomicsDB" id="244588">
    <molecule id="Q38821-1"/>
</dbReference>
<dbReference type="EnsemblPlants" id="AT1G51690.1">
    <molecule id="Q38821-1"/>
    <property type="protein sequence ID" value="AT1G51690.1"/>
    <property type="gene ID" value="AT1G51690"/>
</dbReference>
<dbReference type="EnsemblPlants" id="AT1G51690.2">
    <molecule id="Q38821-2"/>
    <property type="protein sequence ID" value="AT1G51690.2"/>
    <property type="gene ID" value="AT1G51690"/>
</dbReference>
<dbReference type="EnsemblPlants" id="AT1G51690.4">
    <molecule id="Q38821-1"/>
    <property type="protein sequence ID" value="AT1G51690.4"/>
    <property type="gene ID" value="AT1G51690"/>
</dbReference>
<dbReference type="GeneID" id="841594"/>
<dbReference type="Gramene" id="AT1G51690.1">
    <molecule id="Q38821-1"/>
    <property type="protein sequence ID" value="AT1G51690.1"/>
    <property type="gene ID" value="AT1G51690"/>
</dbReference>
<dbReference type="Gramene" id="AT1G51690.2">
    <molecule id="Q38821-2"/>
    <property type="protein sequence ID" value="AT1G51690.2"/>
    <property type="gene ID" value="AT1G51690"/>
</dbReference>
<dbReference type="Gramene" id="AT1G51690.4">
    <molecule id="Q38821-1"/>
    <property type="protein sequence ID" value="AT1G51690.4"/>
    <property type="gene ID" value="AT1G51690"/>
</dbReference>
<dbReference type="KEGG" id="ath:AT1G51690"/>
<dbReference type="Araport" id="AT1G51690"/>
<dbReference type="TAIR" id="AT1G51690">
    <property type="gene designation" value="B ALPHA"/>
</dbReference>
<dbReference type="eggNOG" id="KOG1354">
    <property type="taxonomic scope" value="Eukaryota"/>
</dbReference>
<dbReference type="InParanoid" id="Q38821"/>
<dbReference type="OrthoDB" id="6274823at2759"/>
<dbReference type="PhylomeDB" id="Q38821"/>
<dbReference type="PRO" id="PR:Q38821"/>
<dbReference type="Proteomes" id="UP000006548">
    <property type="component" value="Chromosome 1"/>
</dbReference>
<dbReference type="ExpressionAtlas" id="Q38821">
    <property type="expression patterns" value="baseline and differential"/>
</dbReference>
<dbReference type="GO" id="GO:0000159">
    <property type="term" value="C:protein phosphatase type 2A complex"/>
    <property type="evidence" value="ECO:0007669"/>
    <property type="project" value="InterPro"/>
</dbReference>
<dbReference type="GO" id="GO:0019888">
    <property type="term" value="F:protein phosphatase regulator activity"/>
    <property type="evidence" value="ECO:0007669"/>
    <property type="project" value="InterPro"/>
</dbReference>
<dbReference type="FunFam" id="2.130.10.10:FF:000569">
    <property type="entry name" value="Serine/threonine-protein phosphatase 2A 55 kDa regulatory subunit B"/>
    <property type="match status" value="1"/>
</dbReference>
<dbReference type="FunFam" id="2.130.10.10:FF:000609">
    <property type="entry name" value="Serine/threonine-protein phosphatase 2A 55 kDa regulatory subunit B"/>
    <property type="match status" value="1"/>
</dbReference>
<dbReference type="Gene3D" id="2.130.10.10">
    <property type="entry name" value="YVTN repeat-like/Quinoprotein amine dehydrogenase"/>
    <property type="match status" value="3"/>
</dbReference>
<dbReference type="InterPro" id="IPR000009">
    <property type="entry name" value="PP2A_PR55"/>
</dbReference>
<dbReference type="InterPro" id="IPR018067">
    <property type="entry name" value="PP2A_PR55_CS"/>
</dbReference>
<dbReference type="InterPro" id="IPR015943">
    <property type="entry name" value="WD40/YVTN_repeat-like_dom_sf"/>
</dbReference>
<dbReference type="InterPro" id="IPR036322">
    <property type="entry name" value="WD40_repeat_dom_sf"/>
</dbReference>
<dbReference type="InterPro" id="IPR001680">
    <property type="entry name" value="WD40_rpt"/>
</dbReference>
<dbReference type="PANTHER" id="PTHR11871">
    <property type="entry name" value="PROTEIN PHOSPHATASE PP2A REGULATORY SUBUNIT B"/>
    <property type="match status" value="1"/>
</dbReference>
<dbReference type="Pfam" id="PF00400">
    <property type="entry name" value="WD40"/>
    <property type="match status" value="1"/>
</dbReference>
<dbReference type="PIRSF" id="PIRSF037309">
    <property type="entry name" value="PP2A_PR55"/>
    <property type="match status" value="1"/>
</dbReference>
<dbReference type="PRINTS" id="PR00600">
    <property type="entry name" value="PP2APR55"/>
</dbReference>
<dbReference type="SMART" id="SM00320">
    <property type="entry name" value="WD40"/>
    <property type="match status" value="5"/>
</dbReference>
<dbReference type="SUPFAM" id="SSF50978">
    <property type="entry name" value="WD40 repeat-like"/>
    <property type="match status" value="1"/>
</dbReference>
<dbReference type="PROSITE" id="PS01024">
    <property type="entry name" value="PR55_1"/>
    <property type="match status" value="1"/>
</dbReference>
<dbReference type="PROSITE" id="PS01025">
    <property type="entry name" value="PR55_2"/>
    <property type="match status" value="1"/>
</dbReference>
<dbReference type="PROSITE" id="PS00678">
    <property type="entry name" value="WD_REPEATS_1"/>
    <property type="match status" value="1"/>
</dbReference>